<keyword id="KW-0119">Carbohydrate metabolism</keyword>
<keyword id="KW-0963">Cytoplasm</keyword>
<keyword id="KW-0413">Isomerase</keyword>
<keyword id="KW-0460">Magnesium</keyword>
<keyword id="KW-0479">Metal-binding</keyword>
<keyword id="KW-1185">Reference proteome</keyword>
<keyword id="KW-0859">Xylose metabolism</keyword>
<name>XYLA_PSESM</name>
<accession>Q880Z4</accession>
<organism>
    <name type="scientific">Pseudomonas syringae pv. tomato (strain ATCC BAA-871 / DC3000)</name>
    <dbReference type="NCBI Taxonomy" id="223283"/>
    <lineage>
        <taxon>Bacteria</taxon>
        <taxon>Pseudomonadati</taxon>
        <taxon>Pseudomonadota</taxon>
        <taxon>Gammaproteobacteria</taxon>
        <taxon>Pseudomonadales</taxon>
        <taxon>Pseudomonadaceae</taxon>
        <taxon>Pseudomonas</taxon>
    </lineage>
</organism>
<proteinExistence type="inferred from homology"/>
<dbReference type="EC" id="5.3.1.5" evidence="1"/>
<dbReference type="EMBL" id="AE016853">
    <property type="protein sequence ID" value="AAO56494.1"/>
    <property type="molecule type" value="Genomic_DNA"/>
</dbReference>
<dbReference type="RefSeq" id="NP_792799.1">
    <property type="nucleotide sequence ID" value="NC_004578.1"/>
</dbReference>
<dbReference type="RefSeq" id="WP_005764393.1">
    <property type="nucleotide sequence ID" value="NC_004578.1"/>
</dbReference>
<dbReference type="SMR" id="Q880Z4"/>
<dbReference type="STRING" id="223283.PSPTO_3002"/>
<dbReference type="GeneID" id="1184658"/>
<dbReference type="KEGG" id="pst:PSPTO_3002"/>
<dbReference type="PATRIC" id="fig|223283.9.peg.3066"/>
<dbReference type="eggNOG" id="COG2115">
    <property type="taxonomic scope" value="Bacteria"/>
</dbReference>
<dbReference type="HOGENOM" id="CLU_037261_1_0_6"/>
<dbReference type="OrthoDB" id="9763981at2"/>
<dbReference type="PhylomeDB" id="Q880Z4"/>
<dbReference type="Proteomes" id="UP000002515">
    <property type="component" value="Chromosome"/>
</dbReference>
<dbReference type="GO" id="GO:0005737">
    <property type="term" value="C:cytoplasm"/>
    <property type="evidence" value="ECO:0007669"/>
    <property type="project" value="UniProtKB-SubCell"/>
</dbReference>
<dbReference type="GO" id="GO:0000287">
    <property type="term" value="F:magnesium ion binding"/>
    <property type="evidence" value="ECO:0007669"/>
    <property type="project" value="UniProtKB-UniRule"/>
</dbReference>
<dbReference type="GO" id="GO:0009045">
    <property type="term" value="F:xylose isomerase activity"/>
    <property type="evidence" value="ECO:0007669"/>
    <property type="project" value="UniProtKB-UniRule"/>
</dbReference>
<dbReference type="GO" id="GO:0042732">
    <property type="term" value="P:D-xylose metabolic process"/>
    <property type="evidence" value="ECO:0007669"/>
    <property type="project" value="UniProtKB-UniRule"/>
</dbReference>
<dbReference type="FunFam" id="3.20.20.150:FF:000002">
    <property type="entry name" value="Xylose isomerase"/>
    <property type="match status" value="1"/>
</dbReference>
<dbReference type="Gene3D" id="3.20.20.150">
    <property type="entry name" value="Divalent-metal-dependent TIM barrel enzymes"/>
    <property type="match status" value="1"/>
</dbReference>
<dbReference type="HAMAP" id="MF_00455">
    <property type="entry name" value="Xylose_isom_A"/>
    <property type="match status" value="1"/>
</dbReference>
<dbReference type="InterPro" id="IPR036237">
    <property type="entry name" value="Xyl_isomerase-like_sf"/>
</dbReference>
<dbReference type="InterPro" id="IPR013452">
    <property type="entry name" value="Xylose_isom_bac"/>
</dbReference>
<dbReference type="InterPro" id="IPR001998">
    <property type="entry name" value="Xylose_isomerase"/>
</dbReference>
<dbReference type="NCBIfam" id="NF003998">
    <property type="entry name" value="PRK05474.1"/>
    <property type="match status" value="1"/>
</dbReference>
<dbReference type="NCBIfam" id="TIGR02630">
    <property type="entry name" value="xylose_isom_A"/>
    <property type="match status" value="1"/>
</dbReference>
<dbReference type="PANTHER" id="PTHR48408">
    <property type="match status" value="1"/>
</dbReference>
<dbReference type="PANTHER" id="PTHR48408:SF1">
    <property type="entry name" value="XYLOSE ISOMERASE"/>
    <property type="match status" value="1"/>
</dbReference>
<dbReference type="PRINTS" id="PR00688">
    <property type="entry name" value="XYLOSISMRASE"/>
</dbReference>
<dbReference type="SUPFAM" id="SSF51658">
    <property type="entry name" value="Xylose isomerase-like"/>
    <property type="match status" value="1"/>
</dbReference>
<dbReference type="PROSITE" id="PS51415">
    <property type="entry name" value="XYLOSE_ISOMERASE"/>
    <property type="match status" value="1"/>
</dbReference>
<sequence>MSYFPTVDKVIYEGPDSDSPLAFRHYDADKRVLGKPMREHLRMAACYWHTFVWPGADMFGVGTFKRPWQRAGDPMELAIGKAEAAFEFFSKLGIDYYSFHDTDVAPEGSSIKEYRNNFAQMVDRLERHQEQSGIKLLWGTANCFSNPRFAAGAASNPDPEVFAYAGAQVFSAMNATQRLKGSNYVLWGGREGYETLLNTDLKREREQLGRFMRMVVEHKHKIGFKGDLLIEPKPQEPTKHQYDYDSATVFGFLHQYGLQDEIKVNIEANHATLAGHSFHHEIATAVSLGIFGSIDANRGDPQNGWDTDQFPNSVEEMTLATYEILKAGGFTHGGYNFDSKVRRQSLDDVDLFHGHVAAMDVLALSLERAAAMVQNDKLQQFKDQRYAGWQQPFGQSVLSGGFSLASLAEHAFANELNPQAVSGRQELLEGVVNRFIYT</sequence>
<comment type="catalytic activity">
    <reaction evidence="1">
        <text>alpha-D-xylose = alpha-D-xylulofuranose</text>
        <dbReference type="Rhea" id="RHEA:22816"/>
        <dbReference type="ChEBI" id="CHEBI:28518"/>
        <dbReference type="ChEBI" id="CHEBI:188998"/>
        <dbReference type="EC" id="5.3.1.5"/>
    </reaction>
</comment>
<comment type="cofactor">
    <cofactor evidence="1">
        <name>Mg(2+)</name>
        <dbReference type="ChEBI" id="CHEBI:18420"/>
    </cofactor>
    <text evidence="1">Binds 2 magnesium ions per subunit.</text>
</comment>
<comment type="subunit">
    <text evidence="1">Homotetramer.</text>
</comment>
<comment type="subcellular location">
    <subcellularLocation>
        <location evidence="1">Cytoplasm</location>
    </subcellularLocation>
</comment>
<comment type="similarity">
    <text evidence="1">Belongs to the xylose isomerase family.</text>
</comment>
<evidence type="ECO:0000255" key="1">
    <source>
        <dbReference type="HAMAP-Rule" id="MF_00455"/>
    </source>
</evidence>
<protein>
    <recommendedName>
        <fullName evidence="1">Xylose isomerase</fullName>
        <ecNumber evidence="1">5.3.1.5</ecNumber>
    </recommendedName>
</protein>
<feature type="chain" id="PRO_0000195787" description="Xylose isomerase">
    <location>
        <begin position="1"/>
        <end position="438"/>
    </location>
</feature>
<feature type="active site" evidence="1">
    <location>
        <position position="100"/>
    </location>
</feature>
<feature type="active site" evidence="1">
    <location>
        <position position="103"/>
    </location>
</feature>
<feature type="binding site" evidence="1">
    <location>
        <position position="231"/>
    </location>
    <ligand>
        <name>Mg(2+)</name>
        <dbReference type="ChEBI" id="CHEBI:18420"/>
        <label>1</label>
    </ligand>
</feature>
<feature type="binding site" evidence="1">
    <location>
        <position position="267"/>
    </location>
    <ligand>
        <name>Mg(2+)</name>
        <dbReference type="ChEBI" id="CHEBI:18420"/>
        <label>1</label>
    </ligand>
</feature>
<feature type="binding site" evidence="1">
    <location>
        <position position="267"/>
    </location>
    <ligand>
        <name>Mg(2+)</name>
        <dbReference type="ChEBI" id="CHEBI:18420"/>
        <label>2</label>
    </ligand>
</feature>
<feature type="binding site" evidence="1">
    <location>
        <position position="270"/>
    </location>
    <ligand>
        <name>Mg(2+)</name>
        <dbReference type="ChEBI" id="CHEBI:18420"/>
        <label>2</label>
    </ligand>
</feature>
<feature type="binding site" evidence="1">
    <location>
        <position position="295"/>
    </location>
    <ligand>
        <name>Mg(2+)</name>
        <dbReference type="ChEBI" id="CHEBI:18420"/>
        <label>1</label>
    </ligand>
</feature>
<feature type="binding site" evidence="1">
    <location>
        <position position="306"/>
    </location>
    <ligand>
        <name>Mg(2+)</name>
        <dbReference type="ChEBI" id="CHEBI:18420"/>
        <label>2</label>
    </ligand>
</feature>
<feature type="binding site" evidence="1">
    <location>
        <position position="308"/>
    </location>
    <ligand>
        <name>Mg(2+)</name>
        <dbReference type="ChEBI" id="CHEBI:18420"/>
        <label>2</label>
    </ligand>
</feature>
<feature type="binding site" evidence="1">
    <location>
        <position position="338"/>
    </location>
    <ligand>
        <name>Mg(2+)</name>
        <dbReference type="ChEBI" id="CHEBI:18420"/>
        <label>1</label>
    </ligand>
</feature>
<reference key="1">
    <citation type="journal article" date="2003" name="Proc. Natl. Acad. Sci. U.S.A.">
        <title>The complete genome sequence of the Arabidopsis and tomato pathogen Pseudomonas syringae pv. tomato DC3000.</title>
        <authorList>
            <person name="Buell C.R."/>
            <person name="Joardar V."/>
            <person name="Lindeberg M."/>
            <person name="Selengut J."/>
            <person name="Paulsen I.T."/>
            <person name="Gwinn M.L."/>
            <person name="Dodson R.J."/>
            <person name="DeBoy R.T."/>
            <person name="Durkin A.S."/>
            <person name="Kolonay J.F."/>
            <person name="Madupu R."/>
            <person name="Daugherty S.C."/>
            <person name="Brinkac L.M."/>
            <person name="Beanan M.J."/>
            <person name="Haft D.H."/>
            <person name="Nelson W.C."/>
            <person name="Davidsen T.M."/>
            <person name="Zafar N."/>
            <person name="Zhou L."/>
            <person name="Liu J."/>
            <person name="Yuan Q."/>
            <person name="Khouri H.M."/>
            <person name="Fedorova N.B."/>
            <person name="Tran B."/>
            <person name="Russell D."/>
            <person name="Berry K.J."/>
            <person name="Utterback T.R."/>
            <person name="Van Aken S.E."/>
            <person name="Feldblyum T.V."/>
            <person name="D'Ascenzo M."/>
            <person name="Deng W.-L."/>
            <person name="Ramos A.R."/>
            <person name="Alfano J.R."/>
            <person name="Cartinhour S."/>
            <person name="Chatterjee A.K."/>
            <person name="Delaney T.P."/>
            <person name="Lazarowitz S.G."/>
            <person name="Martin G.B."/>
            <person name="Schneider D.J."/>
            <person name="Tang X."/>
            <person name="Bender C.L."/>
            <person name="White O."/>
            <person name="Fraser C.M."/>
            <person name="Collmer A."/>
        </authorList>
    </citation>
    <scope>NUCLEOTIDE SEQUENCE [LARGE SCALE GENOMIC DNA]</scope>
    <source>
        <strain>ATCC BAA-871 / DC3000</strain>
    </source>
</reference>
<gene>
    <name evidence="1" type="primary">xylA</name>
    <name type="ordered locus">PSPTO_3002</name>
</gene>